<proteinExistence type="inferred from homology"/>
<gene>
    <name evidence="1" type="primary">atpE</name>
    <name type="ordered locus">BLD_1128</name>
</gene>
<evidence type="ECO:0000255" key="1">
    <source>
        <dbReference type="HAMAP-Rule" id="MF_01396"/>
    </source>
</evidence>
<name>ATPL_BIFLD</name>
<reference key="1">
    <citation type="journal article" date="2008" name="BMC Genomics">
        <title>Comparative genomic analysis of the gut bacterium Bifidobacterium longum reveals loci susceptible to deletion during pure culture growth.</title>
        <authorList>
            <person name="Lee J.H."/>
            <person name="Karamychev V.N."/>
            <person name="Kozyavkin S.A."/>
            <person name="Mills D."/>
            <person name="Pavlov A.R."/>
            <person name="Pavlova N.V."/>
            <person name="Polouchine N.N."/>
            <person name="Richardson P.M."/>
            <person name="Shakhova V.V."/>
            <person name="Slesarev A.I."/>
            <person name="Weimer B."/>
            <person name="O'Sullivan D.J."/>
        </authorList>
    </citation>
    <scope>NUCLEOTIDE SEQUENCE [LARGE SCALE GENOMIC DNA]</scope>
    <source>
        <strain>DJO10A</strain>
    </source>
</reference>
<sequence length="75" mass="7660">MDIITLAEVAGNLSVIGYGIGTLGPGIGLGILFGKAMESTARQPEMSGKIQTIMFIGLALVEVLALIGFVAALII</sequence>
<comment type="function">
    <text evidence="1">F(1)F(0) ATP synthase produces ATP from ADP in the presence of a proton or sodium gradient. F-type ATPases consist of two structural domains, F(1) containing the extramembraneous catalytic core and F(0) containing the membrane proton channel, linked together by a central stalk and a peripheral stalk. During catalysis, ATP synthesis in the catalytic domain of F(1) is coupled via a rotary mechanism of the central stalk subunits to proton translocation.</text>
</comment>
<comment type="function">
    <text evidence="1">Key component of the F(0) channel; it plays a direct role in translocation across the membrane. A homomeric c-ring of between 10-14 subunits forms the central stalk rotor element with the F(1) delta and epsilon subunits.</text>
</comment>
<comment type="subunit">
    <text evidence="1">F-type ATPases have 2 components, F(1) - the catalytic core - and F(0) - the membrane proton channel. F(1) has five subunits: alpha(3), beta(3), gamma(1), delta(1), epsilon(1). F(0) has three main subunits: a(1), b(2) and c(10-14). The alpha and beta chains form an alternating ring which encloses part of the gamma chain. F(1) is attached to F(0) by a central stalk formed by the gamma and epsilon chains, while a peripheral stalk is formed by the delta and b chains.</text>
</comment>
<comment type="subcellular location">
    <subcellularLocation>
        <location evidence="1">Cell membrane</location>
        <topology evidence="1">Multi-pass membrane protein</topology>
    </subcellularLocation>
</comment>
<comment type="similarity">
    <text evidence="1">Belongs to the ATPase C chain family.</text>
</comment>
<feature type="chain" id="PRO_1000184337" description="ATP synthase subunit c">
    <location>
        <begin position="1"/>
        <end position="75"/>
    </location>
</feature>
<feature type="transmembrane region" description="Helical" evidence="1">
    <location>
        <begin position="13"/>
        <end position="33"/>
    </location>
</feature>
<feature type="transmembrane region" description="Helical" evidence="1">
    <location>
        <begin position="55"/>
        <end position="75"/>
    </location>
</feature>
<feature type="site" description="Reversibly protonated during proton transport" evidence="1">
    <location>
        <position position="62"/>
    </location>
</feature>
<organism>
    <name type="scientific">Bifidobacterium longum (strain DJO10A)</name>
    <dbReference type="NCBI Taxonomy" id="205913"/>
    <lineage>
        <taxon>Bacteria</taxon>
        <taxon>Bacillati</taxon>
        <taxon>Actinomycetota</taxon>
        <taxon>Actinomycetes</taxon>
        <taxon>Bifidobacteriales</taxon>
        <taxon>Bifidobacteriaceae</taxon>
        <taxon>Bifidobacterium</taxon>
    </lineage>
</organism>
<dbReference type="EMBL" id="CP000605">
    <property type="protein sequence ID" value="ACD98574.1"/>
    <property type="molecule type" value="Genomic_DNA"/>
</dbReference>
<dbReference type="RefSeq" id="WP_003831420.1">
    <property type="nucleotide sequence ID" value="NZ_AABM02000027.1"/>
</dbReference>
<dbReference type="SMR" id="B3DTV5"/>
<dbReference type="GeneID" id="69577494"/>
<dbReference type="KEGG" id="blj:BLD_1128"/>
<dbReference type="HOGENOM" id="CLU_148047_5_2_11"/>
<dbReference type="Proteomes" id="UP000002419">
    <property type="component" value="Chromosome"/>
</dbReference>
<dbReference type="GO" id="GO:0005886">
    <property type="term" value="C:plasma membrane"/>
    <property type="evidence" value="ECO:0007669"/>
    <property type="project" value="UniProtKB-SubCell"/>
</dbReference>
<dbReference type="GO" id="GO:0045259">
    <property type="term" value="C:proton-transporting ATP synthase complex"/>
    <property type="evidence" value="ECO:0007669"/>
    <property type="project" value="UniProtKB-KW"/>
</dbReference>
<dbReference type="GO" id="GO:0033177">
    <property type="term" value="C:proton-transporting two-sector ATPase complex, proton-transporting domain"/>
    <property type="evidence" value="ECO:0007669"/>
    <property type="project" value="InterPro"/>
</dbReference>
<dbReference type="GO" id="GO:0008289">
    <property type="term" value="F:lipid binding"/>
    <property type="evidence" value="ECO:0007669"/>
    <property type="project" value="UniProtKB-KW"/>
</dbReference>
<dbReference type="GO" id="GO:0046933">
    <property type="term" value="F:proton-transporting ATP synthase activity, rotational mechanism"/>
    <property type="evidence" value="ECO:0007669"/>
    <property type="project" value="UniProtKB-UniRule"/>
</dbReference>
<dbReference type="CDD" id="cd18121">
    <property type="entry name" value="ATP-synt_Fo_c"/>
    <property type="match status" value="1"/>
</dbReference>
<dbReference type="FunFam" id="1.20.20.10:FF:000002">
    <property type="entry name" value="ATP synthase subunit c"/>
    <property type="match status" value="1"/>
</dbReference>
<dbReference type="Gene3D" id="1.20.20.10">
    <property type="entry name" value="F1F0 ATP synthase subunit C"/>
    <property type="match status" value="1"/>
</dbReference>
<dbReference type="HAMAP" id="MF_01396">
    <property type="entry name" value="ATP_synth_c_bact"/>
    <property type="match status" value="1"/>
</dbReference>
<dbReference type="InterPro" id="IPR005953">
    <property type="entry name" value="ATP_synth_csu_bac/chlpt"/>
</dbReference>
<dbReference type="InterPro" id="IPR000454">
    <property type="entry name" value="ATP_synth_F0_csu"/>
</dbReference>
<dbReference type="InterPro" id="IPR020537">
    <property type="entry name" value="ATP_synth_F0_csu_DDCD_BS"/>
</dbReference>
<dbReference type="InterPro" id="IPR038662">
    <property type="entry name" value="ATP_synth_F0_csu_sf"/>
</dbReference>
<dbReference type="InterPro" id="IPR002379">
    <property type="entry name" value="ATPase_proteolipid_c-like_dom"/>
</dbReference>
<dbReference type="InterPro" id="IPR035921">
    <property type="entry name" value="F/V-ATP_Csub_sf"/>
</dbReference>
<dbReference type="NCBIfam" id="TIGR01260">
    <property type="entry name" value="ATP_synt_c"/>
    <property type="match status" value="1"/>
</dbReference>
<dbReference type="Pfam" id="PF00137">
    <property type="entry name" value="ATP-synt_C"/>
    <property type="match status" value="1"/>
</dbReference>
<dbReference type="PRINTS" id="PR00124">
    <property type="entry name" value="ATPASEC"/>
</dbReference>
<dbReference type="SUPFAM" id="SSF81333">
    <property type="entry name" value="F1F0 ATP synthase subunit C"/>
    <property type="match status" value="1"/>
</dbReference>
<dbReference type="PROSITE" id="PS00605">
    <property type="entry name" value="ATPASE_C"/>
    <property type="match status" value="1"/>
</dbReference>
<protein>
    <recommendedName>
        <fullName evidence="1">ATP synthase subunit c</fullName>
    </recommendedName>
    <alternativeName>
        <fullName evidence="1">ATP synthase F(0) sector subunit c</fullName>
    </alternativeName>
    <alternativeName>
        <fullName evidence="1">F-type ATPase subunit c</fullName>
        <shortName evidence="1">F-ATPase subunit c</shortName>
    </alternativeName>
    <alternativeName>
        <fullName evidence="1">Lipid-binding protein</fullName>
    </alternativeName>
</protein>
<accession>B3DTV5</accession>
<keyword id="KW-0066">ATP synthesis</keyword>
<keyword id="KW-1003">Cell membrane</keyword>
<keyword id="KW-0138">CF(0)</keyword>
<keyword id="KW-0375">Hydrogen ion transport</keyword>
<keyword id="KW-0406">Ion transport</keyword>
<keyword id="KW-0446">Lipid-binding</keyword>
<keyword id="KW-0472">Membrane</keyword>
<keyword id="KW-0812">Transmembrane</keyword>
<keyword id="KW-1133">Transmembrane helix</keyword>
<keyword id="KW-0813">Transport</keyword>